<reference key="1">
    <citation type="journal article" date="2008" name="Appl. Environ. Microbiol.">
        <title>The genome sequence of the metal-mobilizing, extremely thermoacidophilic archaeon Metallosphaera sedula provides insights into bioleaching-associated metabolism.</title>
        <authorList>
            <person name="Auernik K.S."/>
            <person name="Maezato Y."/>
            <person name="Blum P.H."/>
            <person name="Kelly R.M."/>
        </authorList>
    </citation>
    <scope>NUCLEOTIDE SEQUENCE [LARGE SCALE GENOMIC DNA]</scope>
    <source>
        <strain>ATCC 51363 / DSM 5348 / JCM 9185 / NBRC 15509 / TH2</strain>
    </source>
</reference>
<name>SYL2_METS5</name>
<feature type="chain" id="PRO_0000334842" description="Leucine--tRNA ligase 2">
    <location>
        <begin position="1"/>
        <end position="950"/>
    </location>
</feature>
<feature type="short sequence motif" description="'HIGH' region">
    <location>
        <begin position="47"/>
        <end position="57"/>
    </location>
</feature>
<feature type="short sequence motif" description="'KMSKS' region">
    <location>
        <begin position="631"/>
        <end position="635"/>
    </location>
</feature>
<feature type="binding site" evidence="1">
    <location>
        <position position="634"/>
    </location>
    <ligand>
        <name>ATP</name>
        <dbReference type="ChEBI" id="CHEBI:30616"/>
    </ligand>
</feature>
<dbReference type="EC" id="6.1.1.4" evidence="1"/>
<dbReference type="EMBL" id="CP000682">
    <property type="protein sequence ID" value="ABP96080.1"/>
    <property type="molecule type" value="Genomic_DNA"/>
</dbReference>
<dbReference type="SMR" id="A4YI28"/>
<dbReference type="STRING" id="399549.Msed_1940"/>
<dbReference type="KEGG" id="mse:Msed_1940"/>
<dbReference type="eggNOG" id="arCOG00809">
    <property type="taxonomic scope" value="Archaea"/>
</dbReference>
<dbReference type="HOGENOM" id="CLU_004174_0_0_2"/>
<dbReference type="Proteomes" id="UP000000242">
    <property type="component" value="Chromosome"/>
</dbReference>
<dbReference type="GO" id="GO:0005737">
    <property type="term" value="C:cytoplasm"/>
    <property type="evidence" value="ECO:0007669"/>
    <property type="project" value="UniProtKB-SubCell"/>
</dbReference>
<dbReference type="GO" id="GO:0002161">
    <property type="term" value="F:aminoacyl-tRNA deacylase activity"/>
    <property type="evidence" value="ECO:0007669"/>
    <property type="project" value="InterPro"/>
</dbReference>
<dbReference type="GO" id="GO:0005524">
    <property type="term" value="F:ATP binding"/>
    <property type="evidence" value="ECO:0007669"/>
    <property type="project" value="UniProtKB-UniRule"/>
</dbReference>
<dbReference type="GO" id="GO:0004823">
    <property type="term" value="F:leucine-tRNA ligase activity"/>
    <property type="evidence" value="ECO:0007669"/>
    <property type="project" value="UniProtKB-UniRule"/>
</dbReference>
<dbReference type="GO" id="GO:0006429">
    <property type="term" value="P:leucyl-tRNA aminoacylation"/>
    <property type="evidence" value="ECO:0007669"/>
    <property type="project" value="UniProtKB-UniRule"/>
</dbReference>
<dbReference type="CDD" id="cd07959">
    <property type="entry name" value="Anticodon_Ia_Leu_AEc"/>
    <property type="match status" value="1"/>
</dbReference>
<dbReference type="CDD" id="cd00812">
    <property type="entry name" value="LeuRS_core"/>
    <property type="match status" value="1"/>
</dbReference>
<dbReference type="Gene3D" id="3.30.2320.20">
    <property type="entry name" value="Class I aminoacyl-tRNA synthetases (RS)"/>
    <property type="match status" value="1"/>
</dbReference>
<dbReference type="Gene3D" id="3.40.50.620">
    <property type="entry name" value="HUPs"/>
    <property type="match status" value="1"/>
</dbReference>
<dbReference type="Gene3D" id="1.10.730.10">
    <property type="entry name" value="Isoleucyl-tRNA Synthetase, Domain 1"/>
    <property type="match status" value="1"/>
</dbReference>
<dbReference type="Gene3D" id="1.10.10.720">
    <property type="entry name" value="leucyl-tRNA synthetase"/>
    <property type="match status" value="1"/>
</dbReference>
<dbReference type="Gene3D" id="3.90.740.10">
    <property type="entry name" value="Valyl/Leucyl/Isoleucyl-tRNA synthetase, editing domain"/>
    <property type="match status" value="1"/>
</dbReference>
<dbReference type="HAMAP" id="MF_00049_A">
    <property type="entry name" value="Leu_tRNA_synth_A"/>
    <property type="match status" value="1"/>
</dbReference>
<dbReference type="InterPro" id="IPR002300">
    <property type="entry name" value="aa-tRNA-synth_Ia"/>
</dbReference>
<dbReference type="InterPro" id="IPR020791">
    <property type="entry name" value="Leu-tRNA-lgase_arc"/>
</dbReference>
<dbReference type="InterPro" id="IPR004493">
    <property type="entry name" value="Leu-tRNA-synth_Ia_arc/euk"/>
</dbReference>
<dbReference type="InterPro" id="IPR013155">
    <property type="entry name" value="M/V/L/I-tRNA-synth_anticd-bd"/>
</dbReference>
<dbReference type="InterPro" id="IPR014729">
    <property type="entry name" value="Rossmann-like_a/b/a_fold"/>
</dbReference>
<dbReference type="InterPro" id="IPR009080">
    <property type="entry name" value="tRNAsynth_Ia_anticodon-bd"/>
</dbReference>
<dbReference type="InterPro" id="IPR009008">
    <property type="entry name" value="Val/Leu/Ile-tRNA-synth_edit"/>
</dbReference>
<dbReference type="NCBIfam" id="TIGR00395">
    <property type="entry name" value="leuS_arch"/>
    <property type="match status" value="1"/>
</dbReference>
<dbReference type="NCBIfam" id="NF008957">
    <property type="entry name" value="PRK12300.1"/>
    <property type="match status" value="1"/>
</dbReference>
<dbReference type="PANTHER" id="PTHR45794:SF1">
    <property type="entry name" value="LEUCINE--TRNA LIGASE, CYTOPLASMIC"/>
    <property type="match status" value="1"/>
</dbReference>
<dbReference type="PANTHER" id="PTHR45794">
    <property type="entry name" value="LEUCYL-TRNA SYNTHETASE"/>
    <property type="match status" value="1"/>
</dbReference>
<dbReference type="Pfam" id="PF08264">
    <property type="entry name" value="Anticodon_1"/>
    <property type="match status" value="1"/>
</dbReference>
<dbReference type="Pfam" id="PF00133">
    <property type="entry name" value="tRNA-synt_1"/>
    <property type="match status" value="1"/>
</dbReference>
<dbReference type="SUPFAM" id="SSF47323">
    <property type="entry name" value="Anticodon-binding domain of a subclass of class I aminoacyl-tRNA synthetases"/>
    <property type="match status" value="1"/>
</dbReference>
<dbReference type="SUPFAM" id="SSF52374">
    <property type="entry name" value="Nucleotidylyl transferase"/>
    <property type="match status" value="1"/>
</dbReference>
<dbReference type="SUPFAM" id="SSF50677">
    <property type="entry name" value="ValRS/IleRS/LeuRS editing domain"/>
    <property type="match status" value="1"/>
</dbReference>
<gene>
    <name evidence="1" type="primary">leuS2</name>
    <name type="ordered locus">Msed_1940</name>
</gene>
<comment type="catalytic activity">
    <reaction evidence="1">
        <text>tRNA(Leu) + L-leucine + ATP = L-leucyl-tRNA(Leu) + AMP + diphosphate</text>
        <dbReference type="Rhea" id="RHEA:11688"/>
        <dbReference type="Rhea" id="RHEA-COMP:9613"/>
        <dbReference type="Rhea" id="RHEA-COMP:9622"/>
        <dbReference type="ChEBI" id="CHEBI:30616"/>
        <dbReference type="ChEBI" id="CHEBI:33019"/>
        <dbReference type="ChEBI" id="CHEBI:57427"/>
        <dbReference type="ChEBI" id="CHEBI:78442"/>
        <dbReference type="ChEBI" id="CHEBI:78494"/>
        <dbReference type="ChEBI" id="CHEBI:456215"/>
        <dbReference type="EC" id="6.1.1.4"/>
    </reaction>
</comment>
<comment type="subcellular location">
    <subcellularLocation>
        <location evidence="1">Cytoplasm</location>
    </subcellularLocation>
</comment>
<comment type="similarity">
    <text evidence="1">Belongs to the class-I aminoacyl-tRNA synthetase family.</text>
</comment>
<proteinExistence type="inferred from homology"/>
<keyword id="KW-0030">Aminoacyl-tRNA synthetase</keyword>
<keyword id="KW-0067">ATP-binding</keyword>
<keyword id="KW-0963">Cytoplasm</keyword>
<keyword id="KW-0436">Ligase</keyword>
<keyword id="KW-0547">Nucleotide-binding</keyword>
<keyword id="KW-0648">Protein biosynthesis</keyword>
<keyword id="KW-1185">Reference proteome</keyword>
<protein>
    <recommendedName>
        <fullName evidence="1">Leucine--tRNA ligase 2</fullName>
        <ecNumber evidence="1">6.1.1.4</ecNumber>
    </recommendedName>
    <alternativeName>
        <fullName evidence="1">Leucyl-tRNA synthetase 2</fullName>
        <shortName evidence="1">LeuRS 2</shortName>
    </alternativeName>
</protein>
<evidence type="ECO:0000255" key="1">
    <source>
        <dbReference type="HAMAP-Rule" id="MF_00049"/>
    </source>
</evidence>
<sequence length="950" mass="109016">MITIPSHEFTDLLNEISKKWQEEWSKNRIFEADPKDQKKFFTTVAFPYPNSPFHLGHGRTYVTGDVYARFMRMKGYNVLFPMGFHFTGTPIITMADDVAKGDKDLLDIFQNIYEIPADVIPKLSDPLFMANYFKEDIKAAMREIGLSIDWRREFTTIDPQFSAFIVWQFSKLQKKGYVVKDTHPVGWCPVHNLPVGMHDTKGDMEPEIGEYVVIFFESKMGALAAATLRPETIFGAVAVWVNPKATYTVAEIWGKKVIVSEKAAEKLKFQTDVKVLEKVSGSDLLKIVAINPITGKEIPILPADFVDPTTATGVVMSVPAHAPFDYFYLKKAKVGIEPIPVVAVEGQGDAPAKDLVESSHPKNDADLKKLTEQLYRLEFNKGLMRSDILRLVKDELRAELSVVAGKQVPEARKMVTDILIQRKAGTKMLEIMNKPVYCRCGNEVVVKILQDQWFLDYGNPEWKAKAKKLLDSMRVIPEETRKDFEYALDWLQKRACARTRGLGTPLPWDKKWIIESLSDSTIYMAYYTLSHKIKEFGLHPSQLTEETWDYIMLGEGDVKAISERNKIGVDALQELRRHFTYWYPLDLRHSGPDLIPNHLSFFIFNHAGIFPENLWPRGVAVNGFILYEGKKMSKSLRNIVPLRKAIRTYGADVIRIALSSLVDMSSDANFTEAGARAIADNLKRFYELMQMQDGSTIDGTPEKWLRSKLHRLVRDVTPLMESMRFREVINELLFNLSSYINEYLEMVRSESREYNRDVIREVVETWTKLMAPFAPHLTEEMWHQLGHNTFLSLESWPTPDNSKINDQIELEHEYHKLLIEDIRAILNVYKGKPSSVLLYVHDGSLNQVVKSALDVLNSGGTMKDFMQKNTPKSKEEARVLQRIMQYVTEMPETVKKLIYSNVNEMEVTRKGVPLLRYKLNLEIEVLAYTQEVKQKLNKDALPYRPAILVK</sequence>
<accession>A4YI28</accession>
<organism>
    <name type="scientific">Metallosphaera sedula (strain ATCC 51363 / DSM 5348 / JCM 9185 / NBRC 15509 / TH2)</name>
    <dbReference type="NCBI Taxonomy" id="399549"/>
    <lineage>
        <taxon>Archaea</taxon>
        <taxon>Thermoproteota</taxon>
        <taxon>Thermoprotei</taxon>
        <taxon>Sulfolobales</taxon>
        <taxon>Sulfolobaceae</taxon>
        <taxon>Metallosphaera</taxon>
    </lineage>
</organism>